<organism>
    <name type="scientific">Roseiflexus sp. (strain RS-1)</name>
    <dbReference type="NCBI Taxonomy" id="357808"/>
    <lineage>
        <taxon>Bacteria</taxon>
        <taxon>Bacillati</taxon>
        <taxon>Chloroflexota</taxon>
        <taxon>Chloroflexia</taxon>
        <taxon>Chloroflexales</taxon>
        <taxon>Roseiflexineae</taxon>
        <taxon>Roseiflexaceae</taxon>
        <taxon>Roseiflexus</taxon>
    </lineage>
</organism>
<evidence type="ECO:0000255" key="1">
    <source>
        <dbReference type="HAMAP-Rule" id="MF_00355"/>
    </source>
</evidence>
<name>BCHL_ROSS1</name>
<keyword id="KW-0004">4Fe-4S</keyword>
<keyword id="KW-0067">ATP-binding</keyword>
<keyword id="KW-0077">Bacteriochlorophyll biosynthesis</keyword>
<keyword id="KW-0149">Chlorophyll biosynthesis</keyword>
<keyword id="KW-0408">Iron</keyword>
<keyword id="KW-0411">Iron-sulfur</keyword>
<keyword id="KW-0460">Magnesium</keyword>
<keyword id="KW-0479">Metal-binding</keyword>
<keyword id="KW-0547">Nucleotide-binding</keyword>
<keyword id="KW-0560">Oxidoreductase</keyword>
<keyword id="KW-0602">Photosynthesis</keyword>
<comment type="function">
    <text evidence="1">Component of the dark-operative protochlorophyllide reductase (DPOR) that uses Mg-ATP and reduced ferredoxin to reduce ring D of protochlorophyllide (Pchlide) to form chlorophyllide a (Chlide). This reaction is light-independent. The L component serves as a unique electron donor to the NB-component of the complex, and binds Mg-ATP.</text>
</comment>
<comment type="catalytic activity">
    <reaction evidence="1">
        <text>chlorophyllide a + oxidized 2[4Fe-4S]-[ferredoxin] + 2 ADP + 2 phosphate = protochlorophyllide a + reduced 2[4Fe-4S]-[ferredoxin] + 2 ATP + 2 H2O</text>
        <dbReference type="Rhea" id="RHEA:28202"/>
        <dbReference type="Rhea" id="RHEA-COMP:10002"/>
        <dbReference type="Rhea" id="RHEA-COMP:10004"/>
        <dbReference type="ChEBI" id="CHEBI:15377"/>
        <dbReference type="ChEBI" id="CHEBI:30616"/>
        <dbReference type="ChEBI" id="CHEBI:33722"/>
        <dbReference type="ChEBI" id="CHEBI:33723"/>
        <dbReference type="ChEBI" id="CHEBI:43474"/>
        <dbReference type="ChEBI" id="CHEBI:83348"/>
        <dbReference type="ChEBI" id="CHEBI:83350"/>
        <dbReference type="ChEBI" id="CHEBI:456216"/>
        <dbReference type="EC" id="1.3.7.7"/>
    </reaction>
</comment>
<comment type="cofactor">
    <cofactor evidence="1">
        <name>[4Fe-4S] cluster</name>
        <dbReference type="ChEBI" id="CHEBI:49883"/>
    </cofactor>
    <text evidence="1">Binds 1 [4Fe-4S] cluster per dimer.</text>
</comment>
<comment type="pathway">
    <text evidence="1">Porphyrin-containing compound metabolism; bacteriochlorophyll biosynthesis (light-independent).</text>
</comment>
<comment type="subunit">
    <text evidence="1">Homodimer. Protochlorophyllide reductase is composed of three subunits; BchL, BchN and BchB.</text>
</comment>
<comment type="similarity">
    <text evidence="1">Belongs to the NifH/BchL/ChlL family.</text>
</comment>
<feature type="chain" id="PRO_1000048468" description="Light-independent protochlorophyllide reductase iron-sulfur ATP-binding protein">
    <location>
        <begin position="1"/>
        <end position="273"/>
    </location>
</feature>
<feature type="binding site" evidence="1">
    <location>
        <begin position="12"/>
        <end position="17"/>
    </location>
    <ligand>
        <name>ATP</name>
        <dbReference type="ChEBI" id="CHEBI:30616"/>
    </ligand>
</feature>
<feature type="binding site" evidence="1">
    <location>
        <position position="16"/>
    </location>
    <ligand>
        <name>Mg(2+)</name>
        <dbReference type="ChEBI" id="CHEBI:18420"/>
    </ligand>
</feature>
<feature type="binding site" evidence="1">
    <location>
        <position position="41"/>
    </location>
    <ligand>
        <name>ATP</name>
        <dbReference type="ChEBI" id="CHEBI:30616"/>
    </ligand>
</feature>
<feature type="binding site" evidence="1">
    <location>
        <position position="97"/>
    </location>
    <ligand>
        <name>[4Fe-4S] cluster</name>
        <dbReference type="ChEBI" id="CHEBI:49883"/>
        <note>ligand shared between dimeric partners</note>
    </ligand>
</feature>
<feature type="binding site" evidence="1">
    <location>
        <position position="131"/>
    </location>
    <ligand>
        <name>[4Fe-4S] cluster</name>
        <dbReference type="ChEBI" id="CHEBI:49883"/>
        <note>ligand shared between dimeric partners</note>
    </ligand>
</feature>
<feature type="binding site" evidence="1">
    <location>
        <begin position="182"/>
        <end position="183"/>
    </location>
    <ligand>
        <name>ATP</name>
        <dbReference type="ChEBI" id="CHEBI:30616"/>
    </ligand>
</feature>
<proteinExistence type="inferred from homology"/>
<accession>A5UUJ4</accession>
<protein>
    <recommendedName>
        <fullName evidence="1">Light-independent protochlorophyllide reductase iron-sulfur ATP-binding protein</fullName>
        <shortName evidence="1">DPOR subunit L</shortName>
        <shortName evidence="1">LI-POR subunit L</shortName>
        <ecNumber evidence="1">1.3.7.7</ecNumber>
    </recommendedName>
</protein>
<sequence>MSLTLAIYGKGGIGKSTTSSNLSAALALKGAKVLQIGCDPKHDSTFALTGTLQPTVIDVLTEVDFHHEEVSVEDVVHTGFAGVDTLESGGPPAGSGCGGYVVGETVKLLHEFGLYDKYDVIVFDVLGDVVCGGFSAPLNYADYGIIIACNDFDSIFAANRLCLAIKQKSARYRVELAGIIANRVDYELGGGTTLLEQFAETVGTRIIGRVPYHDLIRRSRLMGKTLFEMEGPGKEECTAPFLEMAEELLNRPRSTVPKPLGDREIFNVIGGWR</sequence>
<gene>
    <name evidence="1" type="primary">bchL</name>
    <name type="ordered locus">RoseRS_1908</name>
</gene>
<dbReference type="EC" id="1.3.7.7" evidence="1"/>
<dbReference type="EMBL" id="CP000686">
    <property type="protein sequence ID" value="ABQ90297.1"/>
    <property type="molecule type" value="Genomic_DNA"/>
</dbReference>
<dbReference type="RefSeq" id="WP_011956643.1">
    <property type="nucleotide sequence ID" value="NC_009523.1"/>
</dbReference>
<dbReference type="SMR" id="A5UUJ4"/>
<dbReference type="STRING" id="357808.RoseRS_1908"/>
<dbReference type="KEGG" id="rrs:RoseRS_1908"/>
<dbReference type="eggNOG" id="COG1348">
    <property type="taxonomic scope" value="Bacteria"/>
</dbReference>
<dbReference type="HOGENOM" id="CLU_059373_2_0_0"/>
<dbReference type="OrthoDB" id="9778641at2"/>
<dbReference type="UniPathway" id="UPA00671"/>
<dbReference type="Proteomes" id="UP000006554">
    <property type="component" value="Chromosome"/>
</dbReference>
<dbReference type="GO" id="GO:0051539">
    <property type="term" value="F:4 iron, 4 sulfur cluster binding"/>
    <property type="evidence" value="ECO:0007669"/>
    <property type="project" value="UniProtKB-UniRule"/>
</dbReference>
<dbReference type="GO" id="GO:0005524">
    <property type="term" value="F:ATP binding"/>
    <property type="evidence" value="ECO:0007669"/>
    <property type="project" value="UniProtKB-UniRule"/>
</dbReference>
<dbReference type="GO" id="GO:0046872">
    <property type="term" value="F:metal ion binding"/>
    <property type="evidence" value="ECO:0007669"/>
    <property type="project" value="UniProtKB-KW"/>
</dbReference>
<dbReference type="GO" id="GO:0016730">
    <property type="term" value="F:oxidoreductase activity, acting on iron-sulfur proteins as donors"/>
    <property type="evidence" value="ECO:0007669"/>
    <property type="project" value="InterPro"/>
</dbReference>
<dbReference type="GO" id="GO:0016636">
    <property type="term" value="F:oxidoreductase activity, acting on the CH-CH group of donors, iron-sulfur protein as acceptor"/>
    <property type="evidence" value="ECO:0007669"/>
    <property type="project" value="UniProtKB-UniRule"/>
</dbReference>
<dbReference type="GO" id="GO:0036070">
    <property type="term" value="P:light-independent bacteriochlorophyll biosynthetic process"/>
    <property type="evidence" value="ECO:0007669"/>
    <property type="project" value="UniProtKB-UniRule"/>
</dbReference>
<dbReference type="GO" id="GO:0019685">
    <property type="term" value="P:photosynthesis, dark reaction"/>
    <property type="evidence" value="ECO:0007669"/>
    <property type="project" value="InterPro"/>
</dbReference>
<dbReference type="Gene3D" id="3.40.50.300">
    <property type="entry name" value="P-loop containing nucleotide triphosphate hydrolases"/>
    <property type="match status" value="1"/>
</dbReference>
<dbReference type="HAMAP" id="MF_00355">
    <property type="entry name" value="ChlL_BchL"/>
    <property type="match status" value="1"/>
</dbReference>
<dbReference type="InterPro" id="IPR030655">
    <property type="entry name" value="NifH/chlL_CS"/>
</dbReference>
<dbReference type="InterPro" id="IPR000392">
    <property type="entry name" value="NifH/frxC"/>
</dbReference>
<dbReference type="InterPro" id="IPR027417">
    <property type="entry name" value="P-loop_NTPase"/>
</dbReference>
<dbReference type="InterPro" id="IPR005971">
    <property type="entry name" value="Protochlorophyllide_ATP-bd"/>
</dbReference>
<dbReference type="NCBIfam" id="TIGR01281">
    <property type="entry name" value="DPOR_bchL"/>
    <property type="match status" value="1"/>
</dbReference>
<dbReference type="PANTHER" id="PTHR42864">
    <property type="entry name" value="LIGHT-INDEPENDENT PROTOCHLOROPHYLLIDE REDUCTASE IRON-SULFUR ATP-BINDING PROTEIN"/>
    <property type="match status" value="1"/>
</dbReference>
<dbReference type="PANTHER" id="PTHR42864:SF2">
    <property type="entry name" value="LIGHT-INDEPENDENT PROTOCHLOROPHYLLIDE REDUCTASE IRON-SULFUR ATP-BINDING PROTEIN"/>
    <property type="match status" value="1"/>
</dbReference>
<dbReference type="Pfam" id="PF00142">
    <property type="entry name" value="Fer4_NifH"/>
    <property type="match status" value="1"/>
</dbReference>
<dbReference type="PIRSF" id="PIRSF000363">
    <property type="entry name" value="Nitrogenase_iron"/>
    <property type="match status" value="1"/>
</dbReference>
<dbReference type="PRINTS" id="PR00091">
    <property type="entry name" value="NITROGNASEII"/>
</dbReference>
<dbReference type="SUPFAM" id="SSF52540">
    <property type="entry name" value="P-loop containing nucleoside triphosphate hydrolases"/>
    <property type="match status" value="1"/>
</dbReference>
<dbReference type="PROSITE" id="PS00746">
    <property type="entry name" value="NIFH_FRXC_1"/>
    <property type="match status" value="1"/>
</dbReference>
<dbReference type="PROSITE" id="PS00692">
    <property type="entry name" value="NIFH_FRXC_2"/>
    <property type="match status" value="1"/>
</dbReference>
<dbReference type="PROSITE" id="PS51026">
    <property type="entry name" value="NIFH_FRXC_3"/>
    <property type="match status" value="1"/>
</dbReference>
<reference key="1">
    <citation type="submission" date="2007-04" db="EMBL/GenBank/DDBJ databases">
        <title>Complete sequence of Roseiflexus sp. RS-1.</title>
        <authorList>
            <consortium name="US DOE Joint Genome Institute"/>
            <person name="Copeland A."/>
            <person name="Lucas S."/>
            <person name="Lapidus A."/>
            <person name="Barry K."/>
            <person name="Detter J.C."/>
            <person name="Glavina del Rio T."/>
            <person name="Hammon N."/>
            <person name="Israni S."/>
            <person name="Dalin E."/>
            <person name="Tice H."/>
            <person name="Pitluck S."/>
            <person name="Chertkov O."/>
            <person name="Brettin T."/>
            <person name="Bruce D."/>
            <person name="Han C."/>
            <person name="Schmutz J."/>
            <person name="Larimer F."/>
            <person name="Land M."/>
            <person name="Hauser L."/>
            <person name="Kyrpides N."/>
            <person name="Mikhailova N."/>
            <person name="Bryant D.A."/>
            <person name="Richardson P."/>
        </authorList>
    </citation>
    <scope>NUCLEOTIDE SEQUENCE [LARGE SCALE GENOMIC DNA]</scope>
    <source>
        <strain>RS-1</strain>
    </source>
</reference>